<name>GPDA_BRUO2</name>
<keyword id="KW-0963">Cytoplasm</keyword>
<keyword id="KW-0444">Lipid biosynthesis</keyword>
<keyword id="KW-0443">Lipid metabolism</keyword>
<keyword id="KW-0520">NAD</keyword>
<keyword id="KW-0521">NADP</keyword>
<keyword id="KW-0547">Nucleotide-binding</keyword>
<keyword id="KW-0560">Oxidoreductase</keyword>
<keyword id="KW-0594">Phospholipid biosynthesis</keyword>
<keyword id="KW-1208">Phospholipid metabolism</keyword>
<evidence type="ECO:0000255" key="1">
    <source>
        <dbReference type="HAMAP-Rule" id="MF_00394"/>
    </source>
</evidence>
<protein>
    <recommendedName>
        <fullName evidence="1">Glycerol-3-phosphate dehydrogenase [NAD(P)+]</fullName>
        <ecNumber evidence="1">1.1.1.94</ecNumber>
    </recommendedName>
    <alternativeName>
        <fullName evidence="1">NAD(P)(+)-dependent glycerol-3-phosphate dehydrogenase</fullName>
    </alternativeName>
    <alternativeName>
        <fullName evidence="1">NAD(P)H-dependent dihydroxyacetone-phosphate reductase</fullName>
    </alternativeName>
</protein>
<feature type="chain" id="PRO_1000049485" description="Glycerol-3-phosphate dehydrogenase [NAD(P)+]">
    <location>
        <begin position="1"/>
        <end position="326"/>
    </location>
</feature>
<feature type="active site" description="Proton acceptor" evidence="1">
    <location>
        <position position="190"/>
    </location>
</feature>
<feature type="binding site" evidence="1">
    <location>
        <position position="13"/>
    </location>
    <ligand>
        <name>NADPH</name>
        <dbReference type="ChEBI" id="CHEBI:57783"/>
    </ligand>
</feature>
<feature type="binding site" evidence="1">
    <location>
        <position position="33"/>
    </location>
    <ligand>
        <name>NADPH</name>
        <dbReference type="ChEBI" id="CHEBI:57783"/>
    </ligand>
</feature>
<feature type="binding site" evidence="1">
    <location>
        <position position="107"/>
    </location>
    <ligand>
        <name>NADPH</name>
        <dbReference type="ChEBI" id="CHEBI:57783"/>
    </ligand>
</feature>
<feature type="binding site" evidence="1">
    <location>
        <position position="107"/>
    </location>
    <ligand>
        <name>sn-glycerol 3-phosphate</name>
        <dbReference type="ChEBI" id="CHEBI:57597"/>
    </ligand>
</feature>
<feature type="binding site" evidence="1">
    <location>
        <position position="135"/>
    </location>
    <ligand>
        <name>sn-glycerol 3-phosphate</name>
        <dbReference type="ChEBI" id="CHEBI:57597"/>
    </ligand>
</feature>
<feature type="binding site" evidence="1">
    <location>
        <position position="137"/>
    </location>
    <ligand>
        <name>sn-glycerol 3-phosphate</name>
        <dbReference type="ChEBI" id="CHEBI:57597"/>
    </ligand>
</feature>
<feature type="binding site" evidence="1">
    <location>
        <position position="139"/>
    </location>
    <ligand>
        <name>NADPH</name>
        <dbReference type="ChEBI" id="CHEBI:57783"/>
    </ligand>
</feature>
<feature type="binding site" evidence="1">
    <location>
        <position position="190"/>
    </location>
    <ligand>
        <name>sn-glycerol 3-phosphate</name>
        <dbReference type="ChEBI" id="CHEBI:57597"/>
    </ligand>
</feature>
<feature type="binding site" evidence="1">
    <location>
        <position position="243"/>
    </location>
    <ligand>
        <name>sn-glycerol 3-phosphate</name>
        <dbReference type="ChEBI" id="CHEBI:57597"/>
    </ligand>
</feature>
<feature type="binding site" evidence="1">
    <location>
        <position position="253"/>
    </location>
    <ligand>
        <name>sn-glycerol 3-phosphate</name>
        <dbReference type="ChEBI" id="CHEBI:57597"/>
    </ligand>
</feature>
<feature type="binding site" evidence="1">
    <location>
        <position position="254"/>
    </location>
    <ligand>
        <name>NADPH</name>
        <dbReference type="ChEBI" id="CHEBI:57783"/>
    </ligand>
</feature>
<feature type="binding site" evidence="1">
    <location>
        <position position="254"/>
    </location>
    <ligand>
        <name>sn-glycerol 3-phosphate</name>
        <dbReference type="ChEBI" id="CHEBI:57597"/>
    </ligand>
</feature>
<feature type="binding site" evidence="1">
    <location>
        <position position="255"/>
    </location>
    <ligand>
        <name>sn-glycerol 3-phosphate</name>
        <dbReference type="ChEBI" id="CHEBI:57597"/>
    </ligand>
</feature>
<feature type="binding site" evidence="1">
    <location>
        <position position="273"/>
    </location>
    <ligand>
        <name>NADPH</name>
        <dbReference type="ChEBI" id="CHEBI:57783"/>
    </ligand>
</feature>
<feature type="binding site" evidence="1">
    <location>
        <position position="275"/>
    </location>
    <ligand>
        <name>NADPH</name>
        <dbReference type="ChEBI" id="CHEBI:57783"/>
    </ligand>
</feature>
<sequence length="326" mass="33324">MSTKIAVLGGGAWGTALAAMAAKGGHESWLYARDAETVVAINKDRRNPCYLGDITLADGIRASTDAAAVVTGADAVLAVIPAQAMRNGLSELGTLIPQASPIVLCAKGIEQNTGRLMSEVVAEILPDHRIAALSGPSFASDVARGLPTAVTVACEDANTADRLAALLSGPAFRCYSTTDLKGVETGGALKNVLAIAAGAAIGRGYGASAQAALVTRGFAELRRIGQAMSARPETIMGLSGLGDLMLTCSSSQSRNYSYGLALGRGEDLTSRPLAEGVATAPIAAELCRKHNISAPIIDAVGALLDGKITIDEAVTALLNRPLKTED</sequence>
<dbReference type="EC" id="1.1.1.94" evidence="1"/>
<dbReference type="EMBL" id="CP000708">
    <property type="protein sequence ID" value="ABQ60106.1"/>
    <property type="molecule type" value="Genomic_DNA"/>
</dbReference>
<dbReference type="RefSeq" id="WP_006014218.1">
    <property type="nucleotide sequence ID" value="NC_009505.1"/>
</dbReference>
<dbReference type="SMR" id="A5VSL7"/>
<dbReference type="GeneID" id="45125164"/>
<dbReference type="KEGG" id="bov:BOV_1817"/>
<dbReference type="HOGENOM" id="CLU_033449_0_2_5"/>
<dbReference type="PhylomeDB" id="A5VSL7"/>
<dbReference type="UniPathway" id="UPA00940"/>
<dbReference type="Proteomes" id="UP000006383">
    <property type="component" value="Chromosome I"/>
</dbReference>
<dbReference type="GO" id="GO:0005829">
    <property type="term" value="C:cytosol"/>
    <property type="evidence" value="ECO:0007669"/>
    <property type="project" value="TreeGrafter"/>
</dbReference>
<dbReference type="GO" id="GO:0047952">
    <property type="term" value="F:glycerol-3-phosphate dehydrogenase [NAD(P)+] activity"/>
    <property type="evidence" value="ECO:0007669"/>
    <property type="project" value="UniProtKB-UniRule"/>
</dbReference>
<dbReference type="GO" id="GO:0051287">
    <property type="term" value="F:NAD binding"/>
    <property type="evidence" value="ECO:0007669"/>
    <property type="project" value="InterPro"/>
</dbReference>
<dbReference type="GO" id="GO:0005975">
    <property type="term" value="P:carbohydrate metabolic process"/>
    <property type="evidence" value="ECO:0007669"/>
    <property type="project" value="InterPro"/>
</dbReference>
<dbReference type="GO" id="GO:0046167">
    <property type="term" value="P:glycerol-3-phosphate biosynthetic process"/>
    <property type="evidence" value="ECO:0007669"/>
    <property type="project" value="UniProtKB-UniRule"/>
</dbReference>
<dbReference type="GO" id="GO:0046168">
    <property type="term" value="P:glycerol-3-phosphate catabolic process"/>
    <property type="evidence" value="ECO:0007669"/>
    <property type="project" value="InterPro"/>
</dbReference>
<dbReference type="GO" id="GO:0006650">
    <property type="term" value="P:glycerophospholipid metabolic process"/>
    <property type="evidence" value="ECO:0007669"/>
    <property type="project" value="UniProtKB-UniRule"/>
</dbReference>
<dbReference type="GO" id="GO:0008654">
    <property type="term" value="P:phospholipid biosynthetic process"/>
    <property type="evidence" value="ECO:0007669"/>
    <property type="project" value="UniProtKB-KW"/>
</dbReference>
<dbReference type="FunFam" id="3.40.50.720:FF:000019">
    <property type="entry name" value="Glycerol-3-phosphate dehydrogenase [NAD(P)+]"/>
    <property type="match status" value="1"/>
</dbReference>
<dbReference type="Gene3D" id="1.10.1040.10">
    <property type="entry name" value="N-(1-d-carboxylethyl)-l-norvaline Dehydrogenase, domain 2"/>
    <property type="match status" value="1"/>
</dbReference>
<dbReference type="Gene3D" id="3.40.50.720">
    <property type="entry name" value="NAD(P)-binding Rossmann-like Domain"/>
    <property type="match status" value="1"/>
</dbReference>
<dbReference type="HAMAP" id="MF_00394">
    <property type="entry name" value="NAD_Glyc3P_dehydrog"/>
    <property type="match status" value="1"/>
</dbReference>
<dbReference type="InterPro" id="IPR008927">
    <property type="entry name" value="6-PGluconate_DH-like_C_sf"/>
</dbReference>
<dbReference type="InterPro" id="IPR013328">
    <property type="entry name" value="6PGD_dom2"/>
</dbReference>
<dbReference type="InterPro" id="IPR006168">
    <property type="entry name" value="G3P_DH_NAD-dep"/>
</dbReference>
<dbReference type="InterPro" id="IPR006109">
    <property type="entry name" value="G3P_DH_NAD-dep_C"/>
</dbReference>
<dbReference type="InterPro" id="IPR011128">
    <property type="entry name" value="G3P_DH_NAD-dep_N"/>
</dbReference>
<dbReference type="InterPro" id="IPR036291">
    <property type="entry name" value="NAD(P)-bd_dom_sf"/>
</dbReference>
<dbReference type="NCBIfam" id="NF000940">
    <property type="entry name" value="PRK00094.1-2"/>
    <property type="match status" value="1"/>
</dbReference>
<dbReference type="NCBIfam" id="NF000942">
    <property type="entry name" value="PRK00094.1-4"/>
    <property type="match status" value="1"/>
</dbReference>
<dbReference type="PANTHER" id="PTHR11728">
    <property type="entry name" value="GLYCEROL-3-PHOSPHATE DEHYDROGENASE"/>
    <property type="match status" value="1"/>
</dbReference>
<dbReference type="PANTHER" id="PTHR11728:SF1">
    <property type="entry name" value="GLYCEROL-3-PHOSPHATE DEHYDROGENASE [NAD(+)] 2, CHLOROPLASTIC"/>
    <property type="match status" value="1"/>
</dbReference>
<dbReference type="Pfam" id="PF07479">
    <property type="entry name" value="NAD_Gly3P_dh_C"/>
    <property type="match status" value="1"/>
</dbReference>
<dbReference type="Pfam" id="PF01210">
    <property type="entry name" value="NAD_Gly3P_dh_N"/>
    <property type="match status" value="1"/>
</dbReference>
<dbReference type="PIRSF" id="PIRSF000114">
    <property type="entry name" value="Glycerol-3-P_dh"/>
    <property type="match status" value="1"/>
</dbReference>
<dbReference type="PRINTS" id="PR00077">
    <property type="entry name" value="GPDHDRGNASE"/>
</dbReference>
<dbReference type="SUPFAM" id="SSF48179">
    <property type="entry name" value="6-phosphogluconate dehydrogenase C-terminal domain-like"/>
    <property type="match status" value="1"/>
</dbReference>
<dbReference type="SUPFAM" id="SSF51735">
    <property type="entry name" value="NAD(P)-binding Rossmann-fold domains"/>
    <property type="match status" value="1"/>
</dbReference>
<dbReference type="PROSITE" id="PS00957">
    <property type="entry name" value="NAD_G3PDH"/>
    <property type="match status" value="1"/>
</dbReference>
<gene>
    <name evidence="1" type="primary">gpsA</name>
    <name type="ordered locus">BOV_1817</name>
</gene>
<organism>
    <name type="scientific">Brucella ovis (strain ATCC 25840 / 63/290 / NCTC 10512)</name>
    <dbReference type="NCBI Taxonomy" id="444178"/>
    <lineage>
        <taxon>Bacteria</taxon>
        <taxon>Pseudomonadati</taxon>
        <taxon>Pseudomonadota</taxon>
        <taxon>Alphaproteobacteria</taxon>
        <taxon>Hyphomicrobiales</taxon>
        <taxon>Brucellaceae</taxon>
        <taxon>Brucella/Ochrobactrum group</taxon>
        <taxon>Brucella</taxon>
    </lineage>
</organism>
<accession>A5VSL7</accession>
<proteinExistence type="inferred from homology"/>
<comment type="function">
    <text evidence="1">Catalyzes the reduction of the glycolytic intermediate dihydroxyacetone phosphate (DHAP) to sn-glycerol 3-phosphate (G3P), the key precursor for phospholipid synthesis.</text>
</comment>
<comment type="catalytic activity">
    <reaction evidence="1">
        <text>sn-glycerol 3-phosphate + NAD(+) = dihydroxyacetone phosphate + NADH + H(+)</text>
        <dbReference type="Rhea" id="RHEA:11092"/>
        <dbReference type="ChEBI" id="CHEBI:15378"/>
        <dbReference type="ChEBI" id="CHEBI:57540"/>
        <dbReference type="ChEBI" id="CHEBI:57597"/>
        <dbReference type="ChEBI" id="CHEBI:57642"/>
        <dbReference type="ChEBI" id="CHEBI:57945"/>
        <dbReference type="EC" id="1.1.1.94"/>
    </reaction>
    <physiologicalReaction direction="right-to-left" evidence="1">
        <dbReference type="Rhea" id="RHEA:11094"/>
    </physiologicalReaction>
</comment>
<comment type="catalytic activity">
    <reaction evidence="1">
        <text>sn-glycerol 3-phosphate + NADP(+) = dihydroxyacetone phosphate + NADPH + H(+)</text>
        <dbReference type="Rhea" id="RHEA:11096"/>
        <dbReference type="ChEBI" id="CHEBI:15378"/>
        <dbReference type="ChEBI" id="CHEBI:57597"/>
        <dbReference type="ChEBI" id="CHEBI:57642"/>
        <dbReference type="ChEBI" id="CHEBI:57783"/>
        <dbReference type="ChEBI" id="CHEBI:58349"/>
        <dbReference type="EC" id="1.1.1.94"/>
    </reaction>
    <physiologicalReaction direction="right-to-left" evidence="1">
        <dbReference type="Rhea" id="RHEA:11098"/>
    </physiologicalReaction>
</comment>
<comment type="pathway">
    <text evidence="1">Membrane lipid metabolism; glycerophospholipid metabolism.</text>
</comment>
<comment type="subcellular location">
    <subcellularLocation>
        <location evidence="1">Cytoplasm</location>
    </subcellularLocation>
</comment>
<comment type="similarity">
    <text evidence="1">Belongs to the NAD-dependent glycerol-3-phosphate dehydrogenase family.</text>
</comment>
<reference key="1">
    <citation type="journal article" date="2009" name="PLoS ONE">
        <title>Genome degradation in Brucella ovis corresponds with narrowing of its host range and tissue tropism.</title>
        <authorList>
            <person name="Tsolis R.M."/>
            <person name="Seshadri R."/>
            <person name="Santos R.L."/>
            <person name="Sangari F.J."/>
            <person name="Lobo J.M."/>
            <person name="de Jong M.F."/>
            <person name="Ren Q."/>
            <person name="Myers G."/>
            <person name="Brinkac L.M."/>
            <person name="Nelson W.C."/>
            <person name="Deboy R.T."/>
            <person name="Angiuoli S."/>
            <person name="Khouri H."/>
            <person name="Dimitrov G."/>
            <person name="Robinson J.R."/>
            <person name="Mulligan S."/>
            <person name="Walker R.L."/>
            <person name="Elzer P.E."/>
            <person name="Hassan K.A."/>
            <person name="Paulsen I.T."/>
        </authorList>
    </citation>
    <scope>NUCLEOTIDE SEQUENCE [LARGE SCALE GENOMIC DNA]</scope>
    <source>
        <strain>ATCC 25840 / 63/290 / NCTC 10512</strain>
    </source>
</reference>